<gene>
    <name evidence="21" type="primary">KCNT1</name>
    <name type="synonym">KIAA1422</name>
    <name type="synonym">SLACK</name>
    <name evidence="19" type="synonym">Slo2.2</name>
</gene>
<evidence type="ECO:0000250" key="1">
    <source>
        <dbReference type="UniProtKB" id="Q6ZPR4"/>
    </source>
</evidence>
<evidence type="ECO:0000250" key="2">
    <source>
        <dbReference type="UniProtKB" id="Q9Z258"/>
    </source>
</evidence>
<evidence type="ECO:0000255" key="3"/>
<evidence type="ECO:0000255" key="4">
    <source>
        <dbReference type="PROSITE-ProRule" id="PRU00543"/>
    </source>
</evidence>
<evidence type="ECO:0000256" key="5">
    <source>
        <dbReference type="SAM" id="MobiDB-lite"/>
    </source>
</evidence>
<evidence type="ECO:0000269" key="6">
    <source>
    </source>
</evidence>
<evidence type="ECO:0000269" key="7">
    <source>
    </source>
</evidence>
<evidence type="ECO:0000269" key="8">
    <source>
    </source>
</evidence>
<evidence type="ECO:0000269" key="9">
    <source>
    </source>
</evidence>
<evidence type="ECO:0000269" key="10">
    <source>
    </source>
</evidence>
<evidence type="ECO:0000269" key="11">
    <source>
    </source>
</evidence>
<evidence type="ECO:0000269" key="12">
    <source>
    </source>
</evidence>
<evidence type="ECO:0000269" key="13">
    <source>
    </source>
</evidence>
<evidence type="ECO:0000269" key="14">
    <source>
    </source>
</evidence>
<evidence type="ECO:0000269" key="15">
    <source>
    </source>
</evidence>
<evidence type="ECO:0000303" key="16">
    <source>
    </source>
</evidence>
<evidence type="ECO:0000303" key="17">
    <source>
    </source>
</evidence>
<evidence type="ECO:0000303" key="18">
    <source>
    </source>
</evidence>
<evidence type="ECO:0000303" key="19">
    <source>
    </source>
</evidence>
<evidence type="ECO:0000305" key="20"/>
<evidence type="ECO:0000312" key="21">
    <source>
        <dbReference type="HGNC" id="HGNC:18865"/>
    </source>
</evidence>
<evidence type="ECO:0007744" key="22">
    <source>
        <dbReference type="PDB" id="8HIR"/>
    </source>
</evidence>
<evidence type="ECO:0007744" key="23">
    <source>
        <dbReference type="PDB" id="8HK6"/>
    </source>
</evidence>
<evidence type="ECO:0007744" key="24">
    <source>
        <dbReference type="PDB" id="8HKF"/>
    </source>
</evidence>
<evidence type="ECO:0007744" key="25">
    <source>
        <dbReference type="PDB" id="8HKK"/>
    </source>
</evidence>
<evidence type="ECO:0007744" key="26">
    <source>
        <dbReference type="PDB" id="8HKM"/>
    </source>
</evidence>
<evidence type="ECO:0007744" key="27">
    <source>
        <dbReference type="PDB" id="8HKQ"/>
    </source>
</evidence>
<evidence type="ECO:0007829" key="28">
    <source>
        <dbReference type="PDB" id="8HKM"/>
    </source>
</evidence>
<organism>
    <name type="scientific">Homo sapiens</name>
    <name type="common">Human</name>
    <dbReference type="NCBI Taxonomy" id="9606"/>
    <lineage>
        <taxon>Eukaryota</taxon>
        <taxon>Metazoa</taxon>
        <taxon>Chordata</taxon>
        <taxon>Craniata</taxon>
        <taxon>Vertebrata</taxon>
        <taxon>Euteleostomi</taxon>
        <taxon>Mammalia</taxon>
        <taxon>Eutheria</taxon>
        <taxon>Euarchontoglires</taxon>
        <taxon>Primates</taxon>
        <taxon>Haplorrhini</taxon>
        <taxon>Catarrhini</taxon>
        <taxon>Hominidae</taxon>
        <taxon>Homo</taxon>
    </lineage>
</organism>
<dbReference type="EMBL" id="AK127272">
    <property type="protein sequence ID" value="BAG54469.1"/>
    <property type="molecule type" value="mRNA"/>
</dbReference>
<dbReference type="EMBL" id="AL158822">
    <property type="status" value="NOT_ANNOTATED_CDS"/>
    <property type="molecule type" value="Genomic_DNA"/>
</dbReference>
<dbReference type="EMBL" id="CH471090">
    <property type="protein sequence ID" value="EAW88180.1"/>
    <property type="molecule type" value="Genomic_DNA"/>
</dbReference>
<dbReference type="EMBL" id="BC136618">
    <property type="protein sequence ID" value="AAI36619.1"/>
    <property type="molecule type" value="mRNA"/>
</dbReference>
<dbReference type="EMBL" id="BC171770">
    <property type="protein sequence ID" value="AAI71770.1"/>
    <property type="molecule type" value="mRNA"/>
</dbReference>
<dbReference type="EMBL" id="AB037843">
    <property type="protein sequence ID" value="BAA92660.1"/>
    <property type="status" value="ALT_INIT"/>
    <property type="molecule type" value="mRNA"/>
</dbReference>
<dbReference type="CCDS" id="CCDS35175.2">
    <molecule id="Q5JUK3-3"/>
</dbReference>
<dbReference type="CCDS" id="CCDS65188.1">
    <molecule id="Q5JUK3-4"/>
</dbReference>
<dbReference type="RefSeq" id="NP_001258932.1">
    <molecule id="Q5JUK3-4"/>
    <property type="nucleotide sequence ID" value="NM_001272003.2"/>
</dbReference>
<dbReference type="RefSeq" id="NP_065873.2">
    <molecule id="Q5JUK3-3"/>
    <property type="nucleotide sequence ID" value="NM_020822.3"/>
</dbReference>
<dbReference type="PDB" id="8HIR">
    <property type="method" value="EM"/>
    <property type="resolution" value="3.18 A"/>
    <property type="chains" value="A/B/C/D=23-1230"/>
</dbReference>
<dbReference type="PDB" id="8HK6">
    <property type="method" value="EM"/>
    <property type="resolution" value="2.64 A"/>
    <property type="chains" value="A/B/C/D=23-1230"/>
</dbReference>
<dbReference type="PDB" id="8HKF">
    <property type="method" value="EM"/>
    <property type="resolution" value="2.66 A"/>
    <property type="chains" value="A/B/C/D=23-1230"/>
</dbReference>
<dbReference type="PDB" id="8HKK">
    <property type="method" value="EM"/>
    <property type="resolution" value="2.84 A"/>
    <property type="chains" value="A/B/C/D=23-1230"/>
</dbReference>
<dbReference type="PDB" id="8HKM">
    <property type="method" value="EM"/>
    <property type="resolution" value="2.95 A"/>
    <property type="chains" value="A/B/C/D=23-1230"/>
</dbReference>
<dbReference type="PDB" id="8HKQ">
    <property type="method" value="EM"/>
    <property type="resolution" value="2.90 A"/>
    <property type="chains" value="A/B/C/D=23-1230"/>
</dbReference>
<dbReference type="PDBsum" id="8HIR"/>
<dbReference type="PDBsum" id="8HK6"/>
<dbReference type="PDBsum" id="8HKF"/>
<dbReference type="PDBsum" id="8HKK"/>
<dbReference type="PDBsum" id="8HKM"/>
<dbReference type="PDBsum" id="8HKQ"/>
<dbReference type="EMDB" id="EMD-34827"/>
<dbReference type="EMDB" id="EMD-34847"/>
<dbReference type="EMDB" id="EMD-34851"/>
<dbReference type="EMDB" id="EMD-34853"/>
<dbReference type="EMDB" id="EMD-34855"/>
<dbReference type="EMDB" id="EMD-34858"/>
<dbReference type="SMR" id="Q5JUK3"/>
<dbReference type="FunCoup" id="Q5JUK3">
    <property type="interactions" value="677"/>
</dbReference>
<dbReference type="IntAct" id="Q5JUK3">
    <property type="interactions" value="1"/>
</dbReference>
<dbReference type="STRING" id="9606.ENSP00000360822"/>
<dbReference type="BindingDB" id="Q5JUK3"/>
<dbReference type="ChEMBL" id="CHEMBL4739688"/>
<dbReference type="DrugBank" id="DB17045">
    <property type="generic name" value="Phorbol 12-myristate 13-acetate diester"/>
</dbReference>
<dbReference type="DrugBank" id="DB08837">
    <property type="generic name" value="Tetraethylammonium"/>
</dbReference>
<dbReference type="DrugCentral" id="Q5JUK3"/>
<dbReference type="GuidetoPHARMACOLOGY" id="385"/>
<dbReference type="GlyCosmos" id="Q5JUK3">
    <property type="glycosylation" value="2 sites, No reported glycans"/>
</dbReference>
<dbReference type="GlyGen" id="Q5JUK3">
    <property type="glycosylation" value="2 sites"/>
</dbReference>
<dbReference type="iPTMnet" id="Q5JUK3"/>
<dbReference type="PhosphoSitePlus" id="Q5JUK3"/>
<dbReference type="BioMuta" id="KCNT1"/>
<dbReference type="DMDM" id="73920089"/>
<dbReference type="MassIVE" id="Q5JUK3"/>
<dbReference type="PaxDb" id="9606-ENSP00000360822"/>
<dbReference type="PeptideAtlas" id="Q5JUK3"/>
<dbReference type="ProteomicsDB" id="34049"/>
<dbReference type="ProteomicsDB" id="63278">
    <molecule id="Q5JUK3-1"/>
</dbReference>
<dbReference type="ProteomicsDB" id="63279">
    <molecule id="Q5JUK3-2"/>
</dbReference>
<dbReference type="ProteomicsDB" id="7527"/>
<dbReference type="ABCD" id="Q5JUK3">
    <property type="antibodies" value="1 sequenced antibody"/>
</dbReference>
<dbReference type="Antibodypedia" id="32072">
    <property type="antibodies" value="174 antibodies from 26 providers"/>
</dbReference>
<dbReference type="DNASU" id="57582"/>
<dbReference type="Ensembl" id="ENST00000371757.7">
    <molecule id="Q5JUK3-3"/>
    <property type="protein sequence ID" value="ENSP00000360822.2"/>
    <property type="gene ID" value="ENSG00000107147.14"/>
</dbReference>
<dbReference type="Ensembl" id="ENST00000487664.5">
    <molecule id="Q5JUK3-2"/>
    <property type="protein sequence ID" value="ENSP00000417851.2"/>
    <property type="gene ID" value="ENSG00000107147.14"/>
</dbReference>
<dbReference type="Ensembl" id="ENST00000488444.6">
    <molecule id="Q5JUK3-1"/>
    <property type="protein sequence ID" value="ENSP00000419007.3"/>
    <property type="gene ID" value="ENSG00000107147.14"/>
</dbReference>
<dbReference type="Ensembl" id="ENST00000628528.2">
    <molecule id="Q5JUK3-4"/>
    <property type="protein sequence ID" value="ENSP00000486374.1"/>
    <property type="gene ID" value="ENSG00000107147.14"/>
</dbReference>
<dbReference type="GeneID" id="57582"/>
<dbReference type="KEGG" id="hsa:57582"/>
<dbReference type="MANE-Select" id="ENST00000371757.7">
    <molecule id="Q5JUK3-3"/>
    <property type="protein sequence ID" value="ENSP00000360822.2"/>
    <property type="RefSeq nucleotide sequence ID" value="NM_020822.3"/>
    <property type="RefSeq protein sequence ID" value="NP_065873.2"/>
</dbReference>
<dbReference type="UCSC" id="uc011mdq.3">
    <molecule id="Q5JUK3-1"/>
    <property type="organism name" value="human"/>
</dbReference>
<dbReference type="AGR" id="HGNC:18865"/>
<dbReference type="CTD" id="57582"/>
<dbReference type="DisGeNET" id="57582"/>
<dbReference type="GeneCards" id="KCNT1"/>
<dbReference type="GeneReviews" id="KCNT1"/>
<dbReference type="HGNC" id="HGNC:18865">
    <property type="gene designation" value="KCNT1"/>
</dbReference>
<dbReference type="HPA" id="ENSG00000107147">
    <property type="expression patterns" value="Tissue enhanced (brain, lymphoid tissue, skeletal muscle)"/>
</dbReference>
<dbReference type="MalaCards" id="KCNT1"/>
<dbReference type="MIM" id="608167">
    <property type="type" value="gene"/>
</dbReference>
<dbReference type="MIM" id="614959">
    <property type="type" value="phenotype"/>
</dbReference>
<dbReference type="MIM" id="615005">
    <property type="type" value="phenotype"/>
</dbReference>
<dbReference type="neXtProt" id="NX_Q5JUK3"/>
<dbReference type="OpenTargets" id="ENSG00000107147"/>
<dbReference type="Orphanet" id="293181">
    <property type="disease" value="Epilepsy of infancy with migrating focal seizures"/>
</dbReference>
<dbReference type="Orphanet" id="98784">
    <property type="disease" value="Sleep-related hypermotor epilepsy"/>
</dbReference>
<dbReference type="PharmGKB" id="PA38725"/>
<dbReference type="VEuPathDB" id="HostDB:ENSG00000107147"/>
<dbReference type="eggNOG" id="KOG3193">
    <property type="taxonomic scope" value="Eukaryota"/>
</dbReference>
<dbReference type="GeneTree" id="ENSGT00940000156880"/>
<dbReference type="InParanoid" id="Q5JUK3"/>
<dbReference type="OMA" id="GMCSIEH"/>
<dbReference type="OrthoDB" id="257992at2759"/>
<dbReference type="PAN-GO" id="Q5JUK3">
    <property type="GO annotations" value="4 GO annotations based on evolutionary models"/>
</dbReference>
<dbReference type="PhylomeDB" id="Q5JUK3"/>
<dbReference type="TreeFam" id="TF314283"/>
<dbReference type="PathwayCommons" id="Q5JUK3"/>
<dbReference type="SignaLink" id="Q5JUK3"/>
<dbReference type="BioGRID-ORCS" id="57582">
    <property type="hits" value="13 hits in 1142 CRISPR screens"/>
</dbReference>
<dbReference type="ChiTaRS" id="KCNT1">
    <property type="organism name" value="human"/>
</dbReference>
<dbReference type="GeneWiki" id="KCNT1"/>
<dbReference type="GenomeRNAi" id="57582"/>
<dbReference type="Pharos" id="Q5JUK3">
    <property type="development level" value="Tchem"/>
</dbReference>
<dbReference type="PRO" id="PR:Q5JUK3"/>
<dbReference type="Proteomes" id="UP000005640">
    <property type="component" value="Chromosome 9"/>
</dbReference>
<dbReference type="RNAct" id="Q5JUK3">
    <property type="molecule type" value="protein"/>
</dbReference>
<dbReference type="Bgee" id="ENSG00000107147">
    <property type="expression patterns" value="Expressed in right hemisphere of cerebellum and 95 other cell types or tissues"/>
</dbReference>
<dbReference type="ExpressionAtlas" id="Q5JUK3">
    <property type="expression patterns" value="baseline and differential"/>
</dbReference>
<dbReference type="GO" id="GO:0005886">
    <property type="term" value="C:plasma membrane"/>
    <property type="evidence" value="ECO:0000250"/>
    <property type="project" value="UniProtKB"/>
</dbReference>
<dbReference type="GO" id="GO:0005228">
    <property type="term" value="F:intracellular sodium-activated potassium channel activity"/>
    <property type="evidence" value="ECO:0000314"/>
    <property type="project" value="UniProtKB"/>
</dbReference>
<dbReference type="GO" id="GO:0046872">
    <property type="term" value="F:metal ion binding"/>
    <property type="evidence" value="ECO:0007669"/>
    <property type="project" value="UniProtKB-KW"/>
</dbReference>
<dbReference type="GO" id="GO:0015271">
    <property type="term" value="F:outward rectifier potassium channel activity"/>
    <property type="evidence" value="ECO:0000250"/>
    <property type="project" value="UniProtKB"/>
</dbReference>
<dbReference type="GO" id="GO:0071805">
    <property type="term" value="P:potassium ion transmembrane transport"/>
    <property type="evidence" value="ECO:0000314"/>
    <property type="project" value="UniProtKB"/>
</dbReference>
<dbReference type="GO" id="GO:0051289">
    <property type="term" value="P:protein homotetramerization"/>
    <property type="evidence" value="ECO:0000314"/>
    <property type="project" value="UniProtKB"/>
</dbReference>
<dbReference type="FunFam" id="3.40.50.720:FF:000011">
    <property type="entry name" value="Potassium channel subfamily T member 1"/>
    <property type="match status" value="1"/>
</dbReference>
<dbReference type="FunFam" id="3.40.50.720:FF:000034">
    <property type="entry name" value="Potassium channel subfamily T member 1"/>
    <property type="match status" value="1"/>
</dbReference>
<dbReference type="FunFam" id="1.10.287.70:FF:000069">
    <property type="entry name" value="Potassium sodium-activated channel subfamily T member 1"/>
    <property type="match status" value="1"/>
</dbReference>
<dbReference type="Gene3D" id="1.10.287.70">
    <property type="match status" value="1"/>
</dbReference>
<dbReference type="Gene3D" id="3.40.50.720">
    <property type="entry name" value="NAD(P)-binding Rossmann-like Domain"/>
    <property type="match status" value="2"/>
</dbReference>
<dbReference type="InterPro" id="IPR003929">
    <property type="entry name" value="K_chnl_BK_asu"/>
</dbReference>
<dbReference type="InterPro" id="IPR013099">
    <property type="entry name" value="K_chnl_dom"/>
</dbReference>
<dbReference type="InterPro" id="IPR047871">
    <property type="entry name" value="K_chnl_Slo-like"/>
</dbReference>
<dbReference type="InterPro" id="IPR003148">
    <property type="entry name" value="RCK_N"/>
</dbReference>
<dbReference type="PANTHER" id="PTHR10027">
    <property type="entry name" value="CALCIUM-ACTIVATED POTASSIUM CHANNEL ALPHA CHAIN"/>
    <property type="match status" value="1"/>
</dbReference>
<dbReference type="PANTHER" id="PTHR10027:SF14">
    <property type="entry name" value="POTASSIUM CHANNEL SUBFAMILY T MEMBER 1"/>
    <property type="match status" value="1"/>
</dbReference>
<dbReference type="Pfam" id="PF03493">
    <property type="entry name" value="BK_channel_a"/>
    <property type="match status" value="1"/>
</dbReference>
<dbReference type="Pfam" id="PF07885">
    <property type="entry name" value="Ion_trans_2"/>
    <property type="match status" value="1"/>
</dbReference>
<dbReference type="Pfam" id="PF22614">
    <property type="entry name" value="Slo-like_RCK"/>
    <property type="match status" value="2"/>
</dbReference>
<dbReference type="SUPFAM" id="SSF81324">
    <property type="entry name" value="Voltage-gated potassium channels"/>
    <property type="match status" value="1"/>
</dbReference>
<dbReference type="PROSITE" id="PS51201">
    <property type="entry name" value="RCK_N"/>
    <property type="match status" value="2"/>
</dbReference>
<accession>Q5JUK3</accession>
<accession>B3KXF7</accession>
<accession>B7ZVY4</accession>
<accession>B9EGP2</accession>
<accession>G5E9V0</accession>
<accession>Q9P2C5</accession>
<keyword id="KW-0002">3D-structure</keyword>
<keyword id="KW-0025">Alternative splicing</keyword>
<keyword id="KW-0106">Calcium</keyword>
<keyword id="KW-1003">Cell membrane</keyword>
<keyword id="KW-0225">Disease variant</keyword>
<keyword id="KW-0887">Epilepsy</keyword>
<keyword id="KW-0325">Glycoprotein</keyword>
<keyword id="KW-0407">Ion channel</keyword>
<keyword id="KW-0406">Ion transport</keyword>
<keyword id="KW-0472">Membrane</keyword>
<keyword id="KW-0479">Metal-binding</keyword>
<keyword id="KW-0597">Phosphoprotein</keyword>
<keyword id="KW-0630">Potassium</keyword>
<keyword id="KW-0631">Potassium channel</keyword>
<keyword id="KW-0633">Potassium transport</keyword>
<keyword id="KW-1267">Proteomics identification</keyword>
<keyword id="KW-1185">Reference proteome</keyword>
<keyword id="KW-0812">Transmembrane</keyword>
<keyword id="KW-1133">Transmembrane helix</keyword>
<keyword id="KW-0813">Transport</keyword>
<keyword id="KW-0862">Zinc</keyword>
<name>KCNT1_HUMAN</name>
<sequence length="1230" mass="138343">MARAKLPRSPSEGKAGPGGAPAGAAAPEEPHGLSPLLPARGGGSVGSDVGQRLPVEDFSLDSSLSQVQVEFYVNENTFKERLKLFFIKNQRSSLRIRLFNFSLKLLTCLLYIVRVLLDDPALGIGCWGCPKQNYSFNDSSSEINWAPILWVERKMTLWAIQVIVAIISFLETMLLIYLSYKGNIWEQIFRVSFVLEMINTLPFIITIFWPPLRNLFIPVFLNCWLAKHALENMINDFHRAILRTQSAMFNQVLILFCTLLCLVFTGTCGIQHLERAGENLSLLTSFYFCIVTFSTVGYGDVTPKIWPSQLLVVIMICVALVVLPLQFEELVYLWMERQKSGGNYSRHRAQTEKHVVLCVSSLKIDLLMDFLNEFYAHPRLQDYYVVILCPTEMDVQVRRVLQIPLWSQRVIYLQGSALKDQDLMRAKMDNGEACFILSSRNEVDRTAADHQTILRAWAVKDFAPNCPLYVQILKPENKFHVKFADHVVCEEECKYAMLALNCICPATSTLITLLVHTSRGQEGQESPEQWQRMYGRCSGNEVYHIRMGDSKFFREYEGKSFTYAAFHAHKKYGVCLIGLKREDNKSILLNPGPRHILAASDTCFYINITKEENSAFIFKQEEKRKKRAFSGQGLHEGPARLPVHSIIASMGTVAMDLQGTEHRPTQSGGGGGGSKLALPTENGSGSRRPSIAPVLELADSSALLPCDLLSDQSEDEVTPSDDEGLSVVEYVKGYPPNSPYIGSSPTLCHLLPVKAPFCCLRLDKGCKHNSYEDAKAYGFKNKLIIVSAETAGNGLYNFIVPLRAYYRSRKELNPIVLLLDNKPDHHFLEAICCFPMVYYMEGSVDNLDSLLQCGIIYADNLVVVDKESTMSAEEDYMADAKTIVNVQTMFRLFPSLSITTELTHPSNMRFMQFRAKDSYSLALSKLEKRERENGSNLAFMFRLPFAAGRVFSISMLDTLLYQSFVKDYMITITRLLLGLDTTPGSGYLCAMKITEGDLWIRTYGRLFQKLCSSSAEIPIGIYRTESHVFSTSESQISVNVEDCEDTREVKGPWGSRAGTGGSSQGRHTGGGDPAEHPLLRRKSLQWARRLSRKAPKQAGRAAAAEWISQQRLSLYRRSERQELSELVKNRMKHLGLPTTGYEDVANLTASDVMNRVNLGYLQDEMNDHQNTLSYVLINPPPDTRLEPSDIVYLIRSDPLAHVASSSQSRKSSCSHKLSSCNPETRDETQL</sequence>
<comment type="function">
    <text evidence="1 2 15">Sodium-activated K(+) channel (PubMed:37494189). Acts as an important mediator of neuronal membrane excitability (PubMed:37494189). Contributes to the delayed outward currents (By similarity). Regulates neuronal bursting in sensory neurons (By similarity). Contributes to synaptic development and plasticity (By similarity).</text>
</comment>
<comment type="catalytic activity">
    <reaction evidence="15">
        <text>K(+)(in) = K(+)(out)</text>
        <dbReference type="Rhea" id="RHEA:29463"/>
        <dbReference type="ChEBI" id="CHEBI:29103"/>
    </reaction>
</comment>
<comment type="activity regulation">
    <text evidence="2 15">Activated by high intracellular Na(+) (PubMed:37494189). In addition to activation by Na(+), is cooperatively activated by intracellular Cl(-) levels (By similarity). Inhibited by Zn(2+) (PubMed:37494189). Activated upon stimulation of G-protein coupled receptors, such as CHRM1 and GRIA1 (By similarity).</text>
</comment>
<comment type="subunit">
    <text evidence="2 7 15">Homotetramer; which constitutes the Na(+)-activated K(+) channel (PubMed:37494189). Interacts with KCNT2; these heterodimer channels differ from the homomers in their unitary conductance, kinetic behavior, subcellular localization, and response to activation of protein kinase C (By similarity). Interacts (via C-terminus) with FMR1; this interaction alters gating properties of KCNT1 (PubMed:20512134). Interacts with CRBN via its cytoplasmic C-terminus (By similarity).</text>
</comment>
<comment type="subcellular location">
    <subcellularLocation>
        <location evidence="2">Cell membrane</location>
        <topology evidence="15">Multi-pass membrane protein</topology>
    </subcellularLocation>
</comment>
<comment type="alternative products">
    <event type="alternative splicing"/>
    <isoform>
        <id>Q5JUK3-1</id>
        <name>1</name>
        <sequence type="displayed"/>
    </isoform>
    <isoform>
        <id>Q5JUK3-2</id>
        <name>2</name>
        <sequence type="described" ref="VSP_015470 VSP_015471"/>
    </isoform>
    <isoform>
        <id>Q5JUK3-3</id>
        <name>3</name>
        <sequence type="described" ref="VSP_015470 VSP_015471 VSP_044476"/>
    </isoform>
    <isoform>
        <id>Q5JUK3-4</id>
        <name>4</name>
        <sequence type="described" ref="VSP_055700 VSP_055701 VSP_015471"/>
    </isoform>
</comment>
<comment type="tissue specificity">
    <text evidence="6">Highest expression in liver, brain and spinal cord. Lowest expression in skeletal muscle.</text>
</comment>
<comment type="domain">
    <text evidence="15">The cytoplasmic gating ring domain of the closed KCNT1 channel harbors multiple K(+) and Zn(2+) sites, which stabilize the channel in the closed conformation. Under low-Na(+) conditions, the abundant cytoplasmic K(+) ions stabilize the gating ring domain in a closed conformation. KCNT1 contains at least two Na(+)-sensitive sites in the RCKs domain where Na(+) binding induces expansion and rotation of the gating ring that opens the inner gate.</text>
</comment>
<comment type="domain">
    <text evidence="2">The cytoplasmic N-terminal domain facilitates the localization of heteromeric KCNT1/KCNT2 channels to the plasma membrane.</text>
</comment>
<comment type="PTM">
    <text evidence="2">Phosphorylated by protein kinase C. Phosphorylation of the C-terminal domain increases channel activity.</text>
</comment>
<comment type="disease" evidence="9 10 11 12 13 14">
    <disease id="DI-03632">
        <name>Developmental and epileptic encephalopathy 14</name>
        <acronym>DEE14</acronym>
        <description>A rare epileptic encephalopathy of infancy that combines pharmacoresistant seizures with developmental delay. This severe neurologic disorder is characterized by onset in the first 6 months of life of refractory focal seizures and arrest of psychomotor development. Ictal EEG shows discharges that arise randomly from various areas of both hemispheres and migrate from one brain region to another.</description>
        <dbReference type="MIM" id="614959"/>
    </disease>
    <text>The disease is caused by variants affecting the gene represented in this entry.</text>
</comment>
<comment type="disease" evidence="8">
    <disease id="DI-03663">
        <name>Epilepsy, nocturnal frontal lobe, 5</name>
        <acronym>ENFL5</acronym>
        <description>An autosomal dominant focal epilepsy syndrome characterized by childhood onset of clusters of motor seizures during sleep. Some patients may develop behavioral or psychiatric manifestations and/or intellectual disability. The phenotype is more severe than observed in other genetic forms of nocturnal frontal lobe epilepsy.</description>
        <dbReference type="MIM" id="615005"/>
    </disease>
    <text>The disease is caused by variants affecting the gene represented in this entry.</text>
</comment>
<comment type="similarity">
    <text evidence="20">Belongs to the potassium channel family. Calcium-activated (TC 1.A.1.3) subfamily. KCa4.1/KCNT1 sub-subfamily.</text>
</comment>
<comment type="sequence caution" evidence="20">
    <conflict type="erroneous initiation">
        <sequence resource="EMBL-CDS" id="BAA92660"/>
    </conflict>
    <text>Extended N-terminus.</text>
</comment>
<proteinExistence type="evidence at protein level"/>
<feature type="chain" id="PRO_0000054090" description="Potassium channel subfamily T member 1">
    <location>
        <begin position="1"/>
        <end position="1230"/>
    </location>
</feature>
<feature type="topological domain" description="Cytoplasmic" evidence="20">
    <location>
        <begin position="1"/>
        <end position="93"/>
    </location>
</feature>
<feature type="transmembrane region" description="Helical; Name=Segment S1" evidence="8 22">
    <location>
        <begin position="94"/>
        <end position="126"/>
    </location>
</feature>
<feature type="topological domain" description="Extracellular" evidence="20">
    <location>
        <begin position="127"/>
        <end position="153"/>
    </location>
</feature>
<feature type="transmembrane region" description="Helical; Name=Segment S2" evidence="8 22">
    <location>
        <begin position="154"/>
        <end position="178"/>
    </location>
</feature>
<feature type="topological domain" description="Cytoplasmic" evidence="20">
    <location>
        <begin position="179"/>
        <end position="192"/>
    </location>
</feature>
<feature type="transmembrane region" description="Helical; Name=Segment S3" evidence="8 22">
    <location>
        <begin position="193"/>
        <end position="208"/>
    </location>
</feature>
<feature type="topological domain" description="Extracellular" evidence="20">
    <location>
        <begin position="209"/>
        <end position="215"/>
    </location>
</feature>
<feature type="transmembrane region" description="Helical; Name=Segment S4" evidence="8 22">
    <location>
        <begin position="216"/>
        <end position="233"/>
    </location>
</feature>
<feature type="topological domain" description="Cytoplasmic" evidence="20">
    <location>
        <begin position="234"/>
        <end position="246"/>
    </location>
</feature>
<feature type="transmembrane region" description="Helical; Name=Segment S5" evidence="20">
    <location>
        <begin position="247"/>
        <end position="274"/>
    </location>
</feature>
<feature type="topological domain" description="Extracellular" evidence="20">
    <location>
        <begin position="275"/>
        <end position="281"/>
    </location>
</feature>
<feature type="intramembrane region" description="Pore-forming" evidence="8 22">
    <location>
        <begin position="282"/>
        <end position="302"/>
    </location>
</feature>
<feature type="topological domain" description="Extracellular" evidence="20">
    <location>
        <begin position="303"/>
        <end position="304"/>
    </location>
</feature>
<feature type="transmembrane region" description="Helical; Name=Segment S6" evidence="8 22">
    <location>
        <begin position="305"/>
        <end position="338"/>
    </location>
</feature>
<feature type="topological domain" description="Cytoplasmic" evidence="20">
    <location>
        <begin position="339"/>
        <end position="1230"/>
    </location>
</feature>
<feature type="domain" description="RCK N-terminal 1" evidence="4">
    <location>
        <begin position="352"/>
        <end position="488"/>
    </location>
</feature>
<feature type="domain" description="RCK N-terminal 2" evidence="4">
    <location>
        <begin position="781"/>
        <end position="921"/>
    </location>
</feature>
<feature type="region of interest" description="Disordered" evidence="5">
    <location>
        <begin position="1"/>
        <end position="37"/>
    </location>
</feature>
<feature type="region of interest" description="Disordered" evidence="5">
    <location>
        <begin position="660"/>
        <end position="689"/>
    </location>
</feature>
<feature type="region of interest" description="Disordered" evidence="5">
    <location>
        <begin position="1048"/>
        <end position="1078"/>
    </location>
</feature>
<feature type="region of interest" description="Disordered" evidence="5">
    <location>
        <begin position="1204"/>
        <end position="1230"/>
    </location>
</feature>
<feature type="compositionally biased region" description="Gly residues" evidence="5">
    <location>
        <begin position="1057"/>
        <end position="1072"/>
    </location>
</feature>
<feature type="compositionally biased region" description="Low complexity" evidence="5">
    <location>
        <begin position="1204"/>
        <end position="1219"/>
    </location>
</feature>
<feature type="binding site" evidence="15 22">
    <location>
        <position position="296"/>
    </location>
    <ligand>
        <name>K(+)</name>
        <dbReference type="ChEBI" id="CHEBI:29103"/>
        <label>1</label>
        <note>ligand shared between homotetrameric partners</note>
    </ligand>
</feature>
<feature type="binding site" evidence="15 22">
    <location>
        <position position="297"/>
    </location>
    <ligand>
        <name>K(+)</name>
        <dbReference type="ChEBI" id="CHEBI:29103"/>
        <label>1</label>
        <note>ligand shared between homotetrameric partners</note>
    </ligand>
</feature>
<feature type="binding site" evidence="15 22">
    <location>
        <position position="513"/>
    </location>
    <ligand>
        <name>Na(+)</name>
        <dbReference type="ChEBI" id="CHEBI:29101"/>
        <label>1</label>
    </ligand>
</feature>
<feature type="binding site" evidence="15 22">
    <location>
        <position position="516"/>
    </location>
    <ligand>
        <name>Na(+)</name>
        <dbReference type="ChEBI" id="CHEBI:29101"/>
        <label>1</label>
    </ligand>
</feature>
<feature type="binding site" evidence="15 22">
    <location>
        <position position="538"/>
    </location>
    <ligand>
        <name>Na(+)</name>
        <dbReference type="ChEBI" id="CHEBI:29101"/>
        <label>1</label>
    </ligand>
</feature>
<feature type="binding site" evidence="15 22">
    <location>
        <position position="540"/>
    </location>
    <ligand>
        <name>Na(+)</name>
        <dbReference type="ChEBI" id="CHEBI:29101"/>
        <label>1</label>
    </ligand>
</feature>
<feature type="binding site" evidence="15 22">
    <location>
        <position position="758"/>
    </location>
    <ligand>
        <name>Zn(2+)</name>
        <dbReference type="ChEBI" id="CHEBI:29105"/>
    </ligand>
</feature>
<feature type="binding site" evidence="15 22">
    <location>
        <position position="759"/>
    </location>
    <ligand>
        <name>Zn(2+)</name>
        <dbReference type="ChEBI" id="CHEBI:29105"/>
    </ligand>
</feature>
<feature type="binding site" evidence="15 25">
    <location>
        <position position="761"/>
    </location>
    <ligand>
        <name>K(+)</name>
        <dbReference type="ChEBI" id="CHEBI:29103"/>
        <label>3</label>
    </ligand>
</feature>
<feature type="binding site" evidence="15 25">
    <location>
        <position position="761"/>
    </location>
    <ligand>
        <name>Na(+)</name>
        <dbReference type="ChEBI" id="CHEBI:29101"/>
        <label>2</label>
    </ligand>
</feature>
<feature type="binding site" evidence="15 25">
    <location>
        <position position="764"/>
    </location>
    <ligand>
        <name>K(+)</name>
        <dbReference type="ChEBI" id="CHEBI:29103"/>
        <label>3</label>
    </ligand>
</feature>
<feature type="binding site" evidence="15 25">
    <location>
        <position position="764"/>
    </location>
    <ligand>
        <name>Na(+)</name>
        <dbReference type="ChEBI" id="CHEBI:29101"/>
        <label>2</label>
    </ligand>
</feature>
<feature type="binding site" evidence="15 22">
    <location>
        <position position="766"/>
    </location>
    <ligand>
        <name>Zn(2+)</name>
        <dbReference type="ChEBI" id="CHEBI:29105"/>
    </ligand>
</feature>
<feature type="binding site" evidence="15 22">
    <location>
        <position position="768"/>
    </location>
    <ligand>
        <name>Zn(2+)</name>
        <dbReference type="ChEBI" id="CHEBI:29105"/>
    </ligand>
</feature>
<feature type="binding site" evidence="15 25">
    <location>
        <position position="769"/>
    </location>
    <ligand>
        <name>K(+)</name>
        <dbReference type="ChEBI" id="CHEBI:29103"/>
        <label>3</label>
    </ligand>
</feature>
<feature type="binding site" evidence="15 25">
    <location>
        <position position="771"/>
    </location>
    <ligand>
        <name>K(+)</name>
        <dbReference type="ChEBI" id="CHEBI:29103"/>
        <label>3</label>
    </ligand>
</feature>
<feature type="binding site" evidence="15 25">
    <location>
        <position position="771"/>
    </location>
    <ligand>
        <name>Na(+)</name>
        <dbReference type="ChEBI" id="CHEBI:29101"/>
        <label>2</label>
    </ligand>
</feature>
<feature type="binding site" evidence="15 25">
    <location>
        <position position="777"/>
    </location>
    <ligand>
        <name>K(+)</name>
        <dbReference type="ChEBI" id="CHEBI:29103"/>
        <label>3</label>
    </ligand>
</feature>
<feature type="binding site" evidence="15 23">
    <location>
        <position position="778"/>
    </location>
    <ligand>
        <name>K(+)</name>
        <dbReference type="ChEBI" id="CHEBI:29103"/>
        <label>2</label>
    </ligand>
</feature>
<feature type="binding site" evidence="15 25">
    <location>
        <position position="779"/>
    </location>
    <ligand>
        <name>Na(+)</name>
        <dbReference type="ChEBI" id="CHEBI:29101"/>
        <label>2</label>
    </ligand>
</feature>
<feature type="binding site" evidence="15 23">
    <location>
        <position position="787"/>
    </location>
    <ligand>
        <name>K(+)</name>
        <dbReference type="ChEBI" id="CHEBI:29103"/>
        <label>2</label>
    </ligand>
</feature>
<feature type="binding site" evidence="15 23">
    <location>
        <position position="818"/>
    </location>
    <ligand>
        <name>K(+)</name>
        <dbReference type="ChEBI" id="CHEBI:29103"/>
        <label>2</label>
    </ligand>
</feature>
<feature type="binding site" evidence="15 23">
    <location>
        <position position="820"/>
    </location>
    <ligand>
        <name>K(+)</name>
        <dbReference type="ChEBI" id="CHEBI:29103"/>
        <label>2</label>
    </ligand>
</feature>
<feature type="binding site" evidence="15 23">
    <location>
        <position position="842"/>
    </location>
    <ligand>
        <name>K(+)</name>
        <dbReference type="ChEBI" id="CHEBI:29103"/>
        <label>2</label>
    </ligand>
</feature>
<feature type="binding site" evidence="15 23">
    <location>
        <position position="865"/>
    </location>
    <ligand>
        <name>K(+)</name>
        <dbReference type="ChEBI" id="CHEBI:29103"/>
        <label>2</label>
    </ligand>
</feature>
<feature type="glycosylation site" description="N-linked (GlcNAc...) asparagine" evidence="3">
    <location>
        <position position="133"/>
    </location>
</feature>
<feature type="glycosylation site" description="N-linked (GlcNAc...) asparagine" evidence="3">
    <location>
        <position position="137"/>
    </location>
</feature>
<feature type="splice variant" id="VSP_015470" description="In isoform 2 and isoform 3." evidence="16 18">
    <original>MARAKLPRSPSEGKAGPGGAPAGAAAPEEPHGLSPLLPARGGGSVGSDVGQRLPVEDFSLDSSLSQ</original>
    <variation>MPLPDGARTPGGVCREARGGGYTNRTFEFDDGQCAPRRPCAGDGALLDTAGFKMSDLDSEVLPLPPRYRFRDLLLGDPSFQNDDR</variation>
    <location>
        <begin position="1"/>
        <end position="66"/>
    </location>
</feature>
<feature type="splice variant" id="VSP_055700" description="In isoform 4." evidence="17">
    <original>MARAKLPRSPSEGKAGPGGAPAGAAAPEEPHGLSPLLPARGGGSVGSDVGQRLPVEDFSLDSSLSQ</original>
    <variation>MPLPDGARTPGGVCREARGGGYTNRTFEFDDGQCAPR</variation>
    <location>
        <begin position="1"/>
        <end position="66"/>
    </location>
</feature>
<feature type="splice variant" id="VSP_055701" description="In isoform 4." evidence="17">
    <original>G</original>
    <variation>GGCR</variation>
    <location>
        <position position="266"/>
    </location>
</feature>
<feature type="splice variant" id="VSP_015471" description="In isoform 2, isoform 3 and isoform 4." evidence="16 17 18">
    <original>E</original>
    <variation>EPHDLRAQ</variation>
    <location>
        <position position="1033"/>
    </location>
</feature>
<feature type="splice variant" id="VSP_044476" description="In isoform 3." evidence="18">
    <location>
        <begin position="1142"/>
        <end position="1162"/>
    </location>
</feature>
<feature type="sequence variant" id="VAR_078683" description="In DEE14; dbSNP:rs587777264." evidence="11 13">
    <original>G</original>
    <variation>S</variation>
    <location>
        <position position="269"/>
    </location>
</feature>
<feature type="sequence variant" id="VAR_069311" description="In ENFL5; dbSNP:rs397515407." evidence="8">
    <original>R</original>
    <variation>Q</variation>
    <location>
        <position position="379"/>
    </location>
</feature>
<feature type="sequence variant" id="VAR_069312" description="In DEE14; gain-of-function mutation; dbSNP:rs397515402." evidence="9">
    <original>R</original>
    <variation>Q</variation>
    <location>
        <position position="409"/>
    </location>
</feature>
<feature type="sequence variant" id="VAR_069313" description="In DEE14; dbSNP:rs397515404." evidence="9">
    <original>R</original>
    <variation>H</variation>
    <location>
        <position position="455"/>
    </location>
</feature>
<feature type="sequence variant" id="VAR_078214" description="In DEE14; dbSNP:rs886041691." evidence="14">
    <original>M</original>
    <variation>V</variation>
    <location>
        <position position="497"/>
    </location>
</feature>
<feature type="sequence variant" id="VAR_078641" description="In DEE14; uncertain significance; dbSNP:rs1185192267." evidence="10">
    <original>T</original>
    <variation>I</variation>
    <location>
        <position position="562"/>
    </location>
</feature>
<feature type="sequence variant" id="VAR_069314" description="In DEE14; dbSNP:rs370521183." evidence="9">
    <original>I</original>
    <variation>M</variation>
    <location>
        <position position="741"/>
    </location>
</feature>
<feature type="sequence variant" id="VAR_069315" description="In ENFL5; dbSNP:rs397515406." evidence="8">
    <original>Y</original>
    <variation>H</variation>
    <location>
        <position position="777"/>
    </location>
</feature>
<feature type="sequence variant" id="VAR_069316" description="In ENFL5; dbSNP:rs797044544." evidence="8">
    <original>M</original>
    <variation>I</variation>
    <location>
        <position position="877"/>
    </location>
</feature>
<feature type="sequence variant" id="VAR_078684" description="In DEE14; uncertain significance." evidence="13">
    <original>M</original>
    <variation>K</variation>
    <location>
        <position position="877"/>
    </location>
</feature>
<feature type="sequence variant" id="VAR_069317" description="In ENFL5; dbSNP:rs397515405." evidence="8">
    <original>R</original>
    <variation>C</variation>
    <location>
        <position position="909"/>
    </location>
</feature>
<feature type="sequence variant" id="VAR_069318" description="In DEE14; gain-of-function mutation; dbSNP:rs397515403." evidence="9 13">
    <original>A</original>
    <variation>T</variation>
    <location>
        <position position="915"/>
    </location>
</feature>
<feature type="sequence variant" id="VAR_078215" description="In DEE14; dbSNP:rs1057519544." evidence="14">
    <original>K</original>
    <variation>E</variation>
    <location>
        <position position="928"/>
    </location>
</feature>
<feature type="sequence variant" id="VAR_078685" description="In DEE14; variant homolog in rat has increased channel activity upon positive potentials; dbSNP:rs1424788778." evidence="12">
    <original>A</original>
    <variation>T</variation>
    <location>
        <position position="947"/>
    </location>
</feature>
<feature type="sequence variant" id="VAR_078642" description="In DEE14; uncertain significance; dbSNP:rs758311066." evidence="10">
    <original>R</original>
    <variation>Q</variation>
    <location>
        <position position="1088"/>
    </location>
</feature>
<feature type="mutagenesis site" description="Reduced the potency of the agonist C23 by 7-8 fold." evidence="15">
    <original>M</original>
    <variation>L</variation>
    <location>
        <position position="315"/>
    </location>
</feature>
<feature type="mutagenesis site" description="Reduced the potency of the agonist C23 by 7-8 fold." evidence="15">
    <original>A</original>
    <variation>T</variation>
    <location>
        <position position="319"/>
    </location>
</feature>
<feature type="mutagenesis site" description="Reduced the potency of the agonist C23 by 28 fold." evidence="15">
    <original>F</original>
    <variation>A</variation>
    <location>
        <position position="327"/>
    </location>
</feature>
<feature type="mutagenesis site" description="Dramatically reduced the Na(+) sensitivity of KCNT1." evidence="15">
    <original>E</original>
    <variation>D</variation>
    <variation>N</variation>
    <variation>A</variation>
    <location>
        <position position="541"/>
    </location>
</feature>
<feature type="mutagenesis site" description="Decreased inhibition by Zn(2+)." evidence="15">
    <original>CC</original>
    <variation>AA</variation>
    <location>
        <begin position="758"/>
        <end position="759"/>
    </location>
</feature>
<feature type="mutagenesis site" description="Reduced the Na(+) sensitivity of KCNT1." evidence="15">
    <original>N</original>
    <variation>A</variation>
    <location>
        <position position="769"/>
    </location>
</feature>
<feature type="mutagenesis site" description="Reduced the Na(+) sensitivity of KCNT1." evidence="15">
    <original>Y</original>
    <variation>F</variation>
    <location>
        <position position="777"/>
    </location>
</feature>
<feature type="mutagenesis site" description="Dramatically reduced the Na(+) sensitivity of KCNT1." evidence="15">
    <original>D</original>
    <variation>N</variation>
    <location>
        <position position="820"/>
    </location>
</feature>
<feature type="mutagenesis site" description="Dramatically reduced the Na(+) sensitivity of KCNT1." evidence="15">
    <original>D</original>
    <variation>A</variation>
    <location>
        <position position="865"/>
    </location>
</feature>
<feature type="mutagenesis site" description="Dramatically reduced the Na(+) sensitivity of KCNT1." evidence="15">
    <original>EEDY</original>
    <variation>AAAA</variation>
    <location>
        <begin position="873"/>
        <end position="876"/>
    </location>
</feature>
<feature type="sequence conflict" description="In Ref. 1; BAG54469." evidence="20" ref="1">
    <original>T</original>
    <variation>I</variation>
    <location>
        <position position="107"/>
    </location>
</feature>
<feature type="sequence conflict" description="In Ref. 1; BAG54469." evidence="20" ref="1">
    <original>L</original>
    <variation>P</variation>
    <location>
        <position position="498"/>
    </location>
</feature>
<feature type="sequence conflict" description="In Ref. 4; AAI71770." evidence="20" ref="4">
    <original>A</original>
    <variation>V</variation>
    <location>
        <position position="615"/>
    </location>
</feature>
<feature type="sequence conflict" description="In Ref. 1; BAG54469." evidence="20" ref="1">
    <original>K</original>
    <variation>E</variation>
    <location>
        <position position="822"/>
    </location>
</feature>
<feature type="sequence conflict" description="In Ref. 1; BAG54469." evidence="20" ref="1">
    <original>M</original>
    <variation>K</variation>
    <location>
        <position position="969"/>
    </location>
</feature>
<feature type="helix" evidence="28">
    <location>
        <begin position="92"/>
        <end position="117"/>
    </location>
</feature>
<feature type="strand" evidence="28">
    <location>
        <begin position="120"/>
        <end position="122"/>
    </location>
</feature>
<feature type="strand" evidence="28">
    <location>
        <begin position="126"/>
        <end position="129"/>
    </location>
</feature>
<feature type="helix" evidence="28">
    <location>
        <begin position="146"/>
        <end position="149"/>
    </location>
</feature>
<feature type="helix" evidence="28">
    <location>
        <begin position="155"/>
        <end position="178"/>
    </location>
</feature>
<feature type="strand" evidence="28">
    <location>
        <begin position="184"/>
        <end position="186"/>
    </location>
</feature>
<feature type="turn" evidence="28">
    <location>
        <begin position="187"/>
        <end position="189"/>
    </location>
</feature>
<feature type="helix" evidence="28">
    <location>
        <begin position="193"/>
        <end position="208"/>
    </location>
</feature>
<feature type="helix" evidence="28">
    <location>
        <begin position="210"/>
        <end position="212"/>
    </location>
</feature>
<feature type="strand" evidence="28">
    <location>
        <begin position="213"/>
        <end position="215"/>
    </location>
</feature>
<feature type="helix" evidence="28">
    <location>
        <begin position="219"/>
        <end position="221"/>
    </location>
</feature>
<feature type="helix" evidence="28">
    <location>
        <begin position="222"/>
        <end position="234"/>
    </location>
</feature>
<feature type="helix" evidence="28">
    <location>
        <begin position="248"/>
        <end position="273"/>
    </location>
</feature>
<feature type="turn" evidence="28">
    <location>
        <begin position="274"/>
        <end position="278"/>
    </location>
</feature>
<feature type="helix" evidence="28">
    <location>
        <begin position="282"/>
        <end position="293"/>
    </location>
</feature>
<feature type="helix" evidence="28">
    <location>
        <begin position="306"/>
        <end position="337"/>
    </location>
</feature>
<feature type="strand" evidence="28">
    <location>
        <begin position="354"/>
        <end position="358"/>
    </location>
</feature>
<feature type="helix" evidence="28">
    <location>
        <begin position="364"/>
        <end position="374"/>
    </location>
</feature>
<feature type="helix" evidence="28">
    <location>
        <begin position="378"/>
        <end position="380"/>
    </location>
</feature>
<feature type="strand" evidence="28">
    <location>
        <begin position="384"/>
        <end position="388"/>
    </location>
</feature>
<feature type="helix" evidence="28">
    <location>
        <begin position="395"/>
        <end position="401"/>
    </location>
</feature>
<feature type="helix" evidence="28">
    <location>
        <begin position="404"/>
        <end position="407"/>
    </location>
</feature>
<feature type="strand" evidence="28">
    <location>
        <begin position="410"/>
        <end position="413"/>
    </location>
</feature>
<feature type="helix" evidence="28">
    <location>
        <begin position="420"/>
        <end position="425"/>
    </location>
</feature>
<feature type="turn" evidence="28">
    <location>
        <begin position="426"/>
        <end position="430"/>
    </location>
</feature>
<feature type="strand" evidence="28">
    <location>
        <begin position="434"/>
        <end position="436"/>
    </location>
</feature>
<feature type="helix" evidence="28">
    <location>
        <begin position="445"/>
        <end position="462"/>
    </location>
</feature>
<feature type="strand" evidence="28">
    <location>
        <begin position="468"/>
        <end position="474"/>
    </location>
</feature>
<feature type="helix" evidence="28">
    <location>
        <begin position="475"/>
        <end position="480"/>
    </location>
</feature>
<feature type="strand" evidence="28">
    <location>
        <begin position="484"/>
        <end position="489"/>
    </location>
</feature>
<feature type="helix" evidence="28">
    <location>
        <begin position="490"/>
        <end position="501"/>
    </location>
</feature>
<feature type="helix" evidence="28">
    <location>
        <begin position="507"/>
        <end position="514"/>
    </location>
</feature>
<feature type="turn" evidence="28">
    <location>
        <begin position="522"/>
        <end position="525"/>
    </location>
</feature>
<feature type="helix" evidence="28">
    <location>
        <begin position="529"/>
        <end position="537"/>
    </location>
</feature>
<feature type="strand" evidence="28">
    <location>
        <begin position="541"/>
        <end position="547"/>
    </location>
</feature>
<feature type="turn" evidence="28">
    <location>
        <begin position="551"/>
        <end position="553"/>
    </location>
</feature>
<feature type="helix" evidence="28">
    <location>
        <begin position="554"/>
        <end position="556"/>
    </location>
</feature>
<feature type="helix" evidence="28">
    <location>
        <begin position="561"/>
        <end position="571"/>
    </location>
</feature>
<feature type="strand" evidence="28">
    <location>
        <begin position="575"/>
        <end position="580"/>
    </location>
</feature>
<feature type="strand" evidence="28">
    <location>
        <begin position="588"/>
        <end position="590"/>
    </location>
</feature>
<feature type="strand" evidence="28">
    <location>
        <begin position="602"/>
        <end position="609"/>
    </location>
</feature>
<feature type="turn" evidence="28">
    <location>
        <begin position="611"/>
        <end position="613"/>
    </location>
</feature>
<feature type="helix" evidence="28">
    <location>
        <begin position="615"/>
        <end position="624"/>
    </location>
</feature>
<feature type="strand" evidence="28">
    <location>
        <begin position="731"/>
        <end position="733"/>
    </location>
</feature>
<feature type="strand" evidence="28">
    <location>
        <begin position="748"/>
        <end position="750"/>
    </location>
</feature>
<feature type="turn" evidence="28">
    <location>
        <begin position="757"/>
        <end position="760"/>
    </location>
</feature>
<feature type="strand" evidence="28">
    <location>
        <begin position="761"/>
        <end position="764"/>
    </location>
</feature>
<feature type="helix" evidence="28">
    <location>
        <begin position="774"/>
        <end position="777"/>
    </location>
</feature>
<feature type="strand" evidence="28">
    <location>
        <begin position="783"/>
        <end position="787"/>
    </location>
</feature>
<feature type="helix" evidence="28">
    <location>
        <begin position="793"/>
        <end position="802"/>
    </location>
</feature>
<feature type="helix" evidence="28">
    <location>
        <begin position="809"/>
        <end position="811"/>
    </location>
</feature>
<feature type="strand" evidence="28">
    <location>
        <begin position="815"/>
        <end position="821"/>
    </location>
</feature>
<feature type="helix" evidence="28">
    <location>
        <begin position="825"/>
        <end position="831"/>
    </location>
</feature>
<feature type="strand" evidence="28">
    <location>
        <begin position="834"/>
        <end position="841"/>
    </location>
</feature>
<feature type="helix" evidence="28">
    <location>
        <begin position="847"/>
        <end position="853"/>
    </location>
</feature>
<feature type="helix" evidence="28">
    <location>
        <begin position="855"/>
        <end position="857"/>
    </location>
</feature>
<feature type="strand" evidence="28">
    <location>
        <begin position="858"/>
        <end position="863"/>
    </location>
</feature>
<feature type="helix" evidence="28">
    <location>
        <begin position="875"/>
        <end position="879"/>
    </location>
</feature>
<feature type="helix" evidence="28">
    <location>
        <begin position="880"/>
        <end position="892"/>
    </location>
</feature>
<feature type="strand" evidence="28">
    <location>
        <begin position="897"/>
        <end position="904"/>
    </location>
</feature>
<feature type="helix" evidence="28">
    <location>
        <begin position="907"/>
        <end position="910"/>
    </location>
</feature>
<feature type="helix" evidence="28">
    <location>
        <begin position="918"/>
        <end position="932"/>
    </location>
</feature>
<feature type="helix" evidence="28">
    <location>
        <begin position="938"/>
        <end position="941"/>
    </location>
</feature>
<feature type="helix" evidence="28">
    <location>
        <begin position="943"/>
        <end position="946"/>
    </location>
</feature>
<feature type="strand" evidence="28">
    <location>
        <begin position="949"/>
        <end position="952"/>
    </location>
</feature>
<feature type="helix" evidence="28">
    <location>
        <begin position="955"/>
        <end position="962"/>
    </location>
</feature>
<feature type="turn" evidence="28">
    <location>
        <begin position="963"/>
        <end position="965"/>
    </location>
</feature>
<feature type="helix" evidence="28">
    <location>
        <begin position="969"/>
        <end position="977"/>
    </location>
</feature>
<feature type="strand" evidence="28">
    <location>
        <begin position="987"/>
        <end position="993"/>
    </location>
</feature>
<feature type="helix" evidence="28">
    <location>
        <begin position="995"/>
        <end position="997"/>
    </location>
</feature>
<feature type="helix" evidence="28">
    <location>
        <begin position="1003"/>
        <end position="1013"/>
    </location>
</feature>
<feature type="strand" evidence="28">
    <location>
        <begin position="1017"/>
        <end position="1026"/>
    </location>
</feature>
<feature type="helix" evidence="28">
    <location>
        <begin position="1103"/>
        <end position="1116"/>
    </location>
</feature>
<feature type="helix" evidence="28">
    <location>
        <begin position="1119"/>
        <end position="1134"/>
    </location>
</feature>
<feature type="strand" evidence="28">
    <location>
        <begin position="1171"/>
        <end position="1178"/>
    </location>
</feature>
<feature type="strand" evidence="28">
    <location>
        <begin position="1189"/>
        <end position="1195"/>
    </location>
</feature>
<reference key="1">
    <citation type="journal article" date="2004" name="Nat. Genet.">
        <title>Complete sequencing and characterization of 21,243 full-length human cDNAs.</title>
        <authorList>
            <person name="Ota T."/>
            <person name="Suzuki Y."/>
            <person name="Nishikawa T."/>
            <person name="Otsuki T."/>
            <person name="Sugiyama T."/>
            <person name="Irie R."/>
            <person name="Wakamatsu A."/>
            <person name="Hayashi K."/>
            <person name="Sato H."/>
            <person name="Nagai K."/>
            <person name="Kimura K."/>
            <person name="Makita H."/>
            <person name="Sekine M."/>
            <person name="Obayashi M."/>
            <person name="Nishi T."/>
            <person name="Shibahara T."/>
            <person name="Tanaka T."/>
            <person name="Ishii S."/>
            <person name="Yamamoto J."/>
            <person name="Saito K."/>
            <person name="Kawai Y."/>
            <person name="Isono Y."/>
            <person name="Nakamura Y."/>
            <person name="Nagahari K."/>
            <person name="Murakami K."/>
            <person name="Yasuda T."/>
            <person name="Iwayanagi T."/>
            <person name="Wagatsuma M."/>
            <person name="Shiratori A."/>
            <person name="Sudo H."/>
            <person name="Hosoiri T."/>
            <person name="Kaku Y."/>
            <person name="Kodaira H."/>
            <person name="Kondo H."/>
            <person name="Sugawara M."/>
            <person name="Takahashi M."/>
            <person name="Kanda K."/>
            <person name="Yokoi T."/>
            <person name="Furuya T."/>
            <person name="Kikkawa E."/>
            <person name="Omura Y."/>
            <person name="Abe K."/>
            <person name="Kamihara K."/>
            <person name="Katsuta N."/>
            <person name="Sato K."/>
            <person name="Tanikawa M."/>
            <person name="Yamazaki M."/>
            <person name="Ninomiya K."/>
            <person name="Ishibashi T."/>
            <person name="Yamashita H."/>
            <person name="Murakawa K."/>
            <person name="Fujimori K."/>
            <person name="Tanai H."/>
            <person name="Kimata M."/>
            <person name="Watanabe M."/>
            <person name="Hiraoka S."/>
            <person name="Chiba Y."/>
            <person name="Ishida S."/>
            <person name="Ono Y."/>
            <person name="Takiguchi S."/>
            <person name="Watanabe S."/>
            <person name="Yosida M."/>
            <person name="Hotuta T."/>
            <person name="Kusano J."/>
            <person name="Kanehori K."/>
            <person name="Takahashi-Fujii A."/>
            <person name="Hara H."/>
            <person name="Tanase T.-O."/>
            <person name="Nomura Y."/>
            <person name="Togiya S."/>
            <person name="Komai F."/>
            <person name="Hara R."/>
            <person name="Takeuchi K."/>
            <person name="Arita M."/>
            <person name="Imose N."/>
            <person name="Musashino K."/>
            <person name="Yuuki H."/>
            <person name="Oshima A."/>
            <person name="Sasaki N."/>
            <person name="Aotsuka S."/>
            <person name="Yoshikawa Y."/>
            <person name="Matsunawa H."/>
            <person name="Ichihara T."/>
            <person name="Shiohata N."/>
            <person name="Sano S."/>
            <person name="Moriya S."/>
            <person name="Momiyama H."/>
            <person name="Satoh N."/>
            <person name="Takami S."/>
            <person name="Terashima Y."/>
            <person name="Suzuki O."/>
            <person name="Nakagawa S."/>
            <person name="Senoh A."/>
            <person name="Mizoguchi H."/>
            <person name="Goto Y."/>
            <person name="Shimizu F."/>
            <person name="Wakebe H."/>
            <person name="Hishigaki H."/>
            <person name="Watanabe T."/>
            <person name="Sugiyama A."/>
            <person name="Takemoto M."/>
            <person name="Kawakami B."/>
            <person name="Yamazaki M."/>
            <person name="Watanabe K."/>
            <person name="Kumagai A."/>
            <person name="Itakura S."/>
            <person name="Fukuzumi Y."/>
            <person name="Fujimori Y."/>
            <person name="Komiyama M."/>
            <person name="Tashiro H."/>
            <person name="Tanigami A."/>
            <person name="Fujiwara T."/>
            <person name="Ono T."/>
            <person name="Yamada K."/>
            <person name="Fujii Y."/>
            <person name="Ozaki K."/>
            <person name="Hirao M."/>
            <person name="Ohmori Y."/>
            <person name="Kawabata A."/>
            <person name="Hikiji T."/>
            <person name="Kobatake N."/>
            <person name="Inagaki H."/>
            <person name="Ikema Y."/>
            <person name="Okamoto S."/>
            <person name="Okitani R."/>
            <person name="Kawakami T."/>
            <person name="Noguchi S."/>
            <person name="Itoh T."/>
            <person name="Shigeta K."/>
            <person name="Senba T."/>
            <person name="Matsumura K."/>
            <person name="Nakajima Y."/>
            <person name="Mizuno T."/>
            <person name="Morinaga M."/>
            <person name="Sasaki M."/>
            <person name="Togashi T."/>
            <person name="Oyama M."/>
            <person name="Hata H."/>
            <person name="Watanabe M."/>
            <person name="Komatsu T."/>
            <person name="Mizushima-Sugano J."/>
            <person name="Satoh T."/>
            <person name="Shirai Y."/>
            <person name="Takahashi Y."/>
            <person name="Nakagawa K."/>
            <person name="Okumura K."/>
            <person name="Nagase T."/>
            <person name="Nomura N."/>
            <person name="Kikuchi H."/>
            <person name="Masuho Y."/>
            <person name="Yamashita R."/>
            <person name="Nakai K."/>
            <person name="Yada T."/>
            <person name="Nakamura Y."/>
            <person name="Ohara O."/>
            <person name="Isogai T."/>
            <person name="Sugano S."/>
        </authorList>
    </citation>
    <scope>NUCLEOTIDE SEQUENCE [LARGE SCALE MRNA] (ISOFORM 4)</scope>
    <source>
        <tissue>Hippocampus</tissue>
    </source>
</reference>
<reference key="2">
    <citation type="journal article" date="2004" name="Nature">
        <title>DNA sequence and analysis of human chromosome 9.</title>
        <authorList>
            <person name="Humphray S.J."/>
            <person name="Oliver K."/>
            <person name="Hunt A.R."/>
            <person name="Plumb R.W."/>
            <person name="Loveland J.E."/>
            <person name="Howe K.L."/>
            <person name="Andrews T.D."/>
            <person name="Searle S."/>
            <person name="Hunt S.E."/>
            <person name="Scott C.E."/>
            <person name="Jones M.C."/>
            <person name="Ainscough R."/>
            <person name="Almeida J.P."/>
            <person name="Ambrose K.D."/>
            <person name="Ashwell R.I.S."/>
            <person name="Babbage A.K."/>
            <person name="Babbage S."/>
            <person name="Bagguley C.L."/>
            <person name="Bailey J."/>
            <person name="Banerjee R."/>
            <person name="Barker D.J."/>
            <person name="Barlow K.F."/>
            <person name="Bates K."/>
            <person name="Beasley H."/>
            <person name="Beasley O."/>
            <person name="Bird C.P."/>
            <person name="Bray-Allen S."/>
            <person name="Brown A.J."/>
            <person name="Brown J.Y."/>
            <person name="Burford D."/>
            <person name="Burrill W."/>
            <person name="Burton J."/>
            <person name="Carder C."/>
            <person name="Carter N.P."/>
            <person name="Chapman J.C."/>
            <person name="Chen Y."/>
            <person name="Clarke G."/>
            <person name="Clark S.Y."/>
            <person name="Clee C.M."/>
            <person name="Clegg S."/>
            <person name="Collier R.E."/>
            <person name="Corby N."/>
            <person name="Crosier M."/>
            <person name="Cummings A.T."/>
            <person name="Davies J."/>
            <person name="Dhami P."/>
            <person name="Dunn M."/>
            <person name="Dutta I."/>
            <person name="Dyer L.W."/>
            <person name="Earthrowl M.E."/>
            <person name="Faulkner L."/>
            <person name="Fleming C.J."/>
            <person name="Frankish A."/>
            <person name="Frankland J.A."/>
            <person name="French L."/>
            <person name="Fricker D.G."/>
            <person name="Garner P."/>
            <person name="Garnett J."/>
            <person name="Ghori J."/>
            <person name="Gilbert J.G.R."/>
            <person name="Glison C."/>
            <person name="Grafham D.V."/>
            <person name="Gribble S."/>
            <person name="Griffiths C."/>
            <person name="Griffiths-Jones S."/>
            <person name="Grocock R."/>
            <person name="Guy J."/>
            <person name="Hall R.E."/>
            <person name="Hammond S."/>
            <person name="Harley J.L."/>
            <person name="Harrison E.S.I."/>
            <person name="Hart E.A."/>
            <person name="Heath P.D."/>
            <person name="Henderson C.D."/>
            <person name="Hopkins B.L."/>
            <person name="Howard P.J."/>
            <person name="Howden P.J."/>
            <person name="Huckle E."/>
            <person name="Johnson C."/>
            <person name="Johnson D."/>
            <person name="Joy A.A."/>
            <person name="Kay M."/>
            <person name="Keenan S."/>
            <person name="Kershaw J.K."/>
            <person name="Kimberley A.M."/>
            <person name="King A."/>
            <person name="Knights A."/>
            <person name="Laird G.K."/>
            <person name="Langford C."/>
            <person name="Lawlor S."/>
            <person name="Leongamornlert D.A."/>
            <person name="Leversha M."/>
            <person name="Lloyd C."/>
            <person name="Lloyd D.M."/>
            <person name="Lovell J."/>
            <person name="Martin S."/>
            <person name="Mashreghi-Mohammadi M."/>
            <person name="Matthews L."/>
            <person name="McLaren S."/>
            <person name="McLay K.E."/>
            <person name="McMurray A."/>
            <person name="Milne S."/>
            <person name="Nickerson T."/>
            <person name="Nisbett J."/>
            <person name="Nordsiek G."/>
            <person name="Pearce A.V."/>
            <person name="Peck A.I."/>
            <person name="Porter K.M."/>
            <person name="Pandian R."/>
            <person name="Pelan S."/>
            <person name="Phillimore B."/>
            <person name="Povey S."/>
            <person name="Ramsey Y."/>
            <person name="Rand V."/>
            <person name="Scharfe M."/>
            <person name="Sehra H.K."/>
            <person name="Shownkeen R."/>
            <person name="Sims S.K."/>
            <person name="Skuce C.D."/>
            <person name="Smith M."/>
            <person name="Steward C.A."/>
            <person name="Swarbreck D."/>
            <person name="Sycamore N."/>
            <person name="Tester J."/>
            <person name="Thorpe A."/>
            <person name="Tracey A."/>
            <person name="Tromans A."/>
            <person name="Thomas D.W."/>
            <person name="Wall M."/>
            <person name="Wallis J.M."/>
            <person name="West A.P."/>
            <person name="Whitehead S.L."/>
            <person name="Willey D.L."/>
            <person name="Williams S.A."/>
            <person name="Wilming L."/>
            <person name="Wray P.W."/>
            <person name="Young L."/>
            <person name="Ashurst J.L."/>
            <person name="Coulson A."/>
            <person name="Blocker H."/>
            <person name="Durbin R.M."/>
            <person name="Sulston J.E."/>
            <person name="Hubbard T."/>
            <person name="Jackson M.J."/>
            <person name="Bentley D.R."/>
            <person name="Beck S."/>
            <person name="Rogers J."/>
            <person name="Dunham I."/>
        </authorList>
    </citation>
    <scope>NUCLEOTIDE SEQUENCE [LARGE SCALE GENOMIC DNA]</scope>
</reference>
<reference key="3">
    <citation type="submission" date="2005-07" db="EMBL/GenBank/DDBJ databases">
        <authorList>
            <person name="Mural R.J."/>
            <person name="Istrail S."/>
            <person name="Sutton G.G."/>
            <person name="Florea L."/>
            <person name="Halpern A.L."/>
            <person name="Mobarry C.M."/>
            <person name="Lippert R."/>
            <person name="Walenz B."/>
            <person name="Shatkay H."/>
            <person name="Dew I."/>
            <person name="Miller J.R."/>
            <person name="Flanigan M.J."/>
            <person name="Edwards N.J."/>
            <person name="Bolanos R."/>
            <person name="Fasulo D."/>
            <person name="Halldorsson B.V."/>
            <person name="Hannenhalli S."/>
            <person name="Turner R."/>
            <person name="Yooseph S."/>
            <person name="Lu F."/>
            <person name="Nusskern D.R."/>
            <person name="Shue B.C."/>
            <person name="Zheng X.H."/>
            <person name="Zhong F."/>
            <person name="Delcher A.L."/>
            <person name="Huson D.H."/>
            <person name="Kravitz S.A."/>
            <person name="Mouchard L."/>
            <person name="Reinert K."/>
            <person name="Remington K.A."/>
            <person name="Clark A.G."/>
            <person name="Waterman M.S."/>
            <person name="Eichler E.E."/>
            <person name="Adams M.D."/>
            <person name="Hunkapiller M.W."/>
            <person name="Myers E.W."/>
            <person name="Venter J.C."/>
        </authorList>
    </citation>
    <scope>NUCLEOTIDE SEQUENCE [LARGE SCALE GENOMIC DNA]</scope>
</reference>
<reference key="4">
    <citation type="journal article" date="2004" name="Genome Res.">
        <title>The status, quality, and expansion of the NIH full-length cDNA project: the Mammalian Gene Collection (MGC).</title>
        <authorList>
            <consortium name="The MGC Project Team"/>
        </authorList>
    </citation>
    <scope>NUCLEOTIDE SEQUENCE [LARGE SCALE MRNA] (ISOFORM 3)</scope>
    <source>
        <tissue>Testis</tissue>
    </source>
</reference>
<reference key="5">
    <citation type="journal article" date="2000" name="DNA Res.">
        <title>Prediction of the coding sequences of unidentified human genes. XVI. The complete sequences of 150 new cDNA clones from brain which code for large proteins in vitro.</title>
        <authorList>
            <person name="Nagase T."/>
            <person name="Kikuno R."/>
            <person name="Ishikawa K."/>
            <person name="Hirosawa M."/>
            <person name="Ohara O."/>
        </authorList>
    </citation>
    <scope>NUCLEOTIDE SEQUENCE [LARGE SCALE MRNA] OF 1-1103 (ISOFORM 2)</scope>
    <scope>TISSUE SPECIFICITY</scope>
    <source>
        <tissue>Brain</tissue>
    </source>
</reference>
<reference key="6">
    <citation type="journal article" date="2010" name="Nat. Neurosci.">
        <title>Fragile X mental retardation protein controls gating of the sodium-activated potassium channel Slack.</title>
        <authorList>
            <person name="Brown M.R."/>
            <person name="Kronengold J."/>
            <person name="Gazula V.R."/>
            <person name="Chen Y."/>
            <person name="Strumbos J.G."/>
            <person name="Sigworth F.J."/>
            <person name="Navaratnam D."/>
            <person name="Kaczmarek L.K."/>
        </authorList>
    </citation>
    <scope>INTERACTION WITH FMR1</scope>
</reference>
<reference evidence="22 23 24 25 26 27" key="7">
    <citation type="journal article" date="2023" name="Cell Rep.">
        <title>Structural basis of human Slo2.2 channel gating and modulation.</title>
        <authorList>
            <person name="Zhang J."/>
            <person name="Liu S."/>
            <person name="Fan J."/>
            <person name="Yan R."/>
            <person name="Huang B."/>
            <person name="Zhou F."/>
            <person name="Yuan T."/>
            <person name="Gong J."/>
            <person name="Huang Z."/>
            <person name="Jiang D."/>
        </authorList>
    </citation>
    <scope>STRUCTURE BY ELECTRON MICROSCOPY (2.64 ANGSTROMS) OF 23-1230 IN COMPLEX WITH SODIUM AND INHIBITOR C23</scope>
    <scope>FUNCTION</scope>
    <scope>TRANSPORTER ACTIVITY</scope>
    <scope>ACTIVITY REGULATION</scope>
    <scope>SUBUNIT</scope>
    <scope>MUTAGENESIS OF MET-315; ALA-319; PHE-327; GLU-541; 758-CYS-CYS-759; ASN-769; TYR-777; ASP-820; ASP-865 AND 873-GLU--TYR-876</scope>
</reference>
<reference key="8">
    <citation type="journal article" date="2012" name="Nat. Genet.">
        <title>Missense mutations in the sodium-gated potassium channel gene KCNT1 cause severe autosomal dominant nocturnal frontal lobe epilepsy.</title>
        <authorList>
            <person name="Heron S.E."/>
            <person name="Smith K.R."/>
            <person name="Bahlo M."/>
            <person name="Nobili L."/>
            <person name="Kahana E."/>
            <person name="Licchetta L."/>
            <person name="Oliver K.L."/>
            <person name="Mazarib A."/>
            <person name="Afawi Z."/>
            <person name="Korczyn A."/>
            <person name="Plazzi G."/>
            <person name="Petrou S."/>
            <person name="Berkovic S.F."/>
            <person name="Scheffer I.E."/>
            <person name="Dibbens L.M."/>
        </authorList>
    </citation>
    <scope>VARIANTS ENFL5 GLN-379; HIS-777; ILE-877 AND CYS-909</scope>
</reference>
<reference key="9">
    <citation type="journal article" date="2012" name="Nat. Genet.">
        <title>De novo gain-of-function KCNT1 channel mutations cause malignant migrating partial seizures of infancy.</title>
        <authorList>
            <person name="Barcia G."/>
            <person name="Fleming M.R."/>
            <person name="Deligniere A."/>
            <person name="Gazula V.R."/>
            <person name="Brown M.R."/>
            <person name="Langouet M."/>
            <person name="Chen H."/>
            <person name="Kronengold J."/>
            <person name="Abhyankar A."/>
            <person name="Cilio R."/>
            <person name="Nitschke P."/>
            <person name="Kaminska A."/>
            <person name="Boddaert N."/>
            <person name="Casanova J.L."/>
            <person name="Desguerre I."/>
            <person name="Munnich A."/>
            <person name="Dulac O."/>
            <person name="Kaczmarek L.K."/>
            <person name="Colleaux L."/>
            <person name="Nabbout R."/>
        </authorList>
    </citation>
    <scope>VARIANTS DEE14 GLN-409; HIS-455; MET-741 AND THR-915</scope>
    <scope>CHARACTERIZATION OF VARIANTS DEE14 GLN-409 AND THR-915</scope>
</reference>
<reference key="10">
    <citation type="journal article" date="2013" name="Gene">
        <title>A recurrent KCNT1 mutation in two sporadic cases with malignant migrating partial seizures in infancy.</title>
        <authorList>
            <person name="Ishii A."/>
            <person name="Shioda M."/>
            <person name="Okumura A."/>
            <person name="Kidokoro H."/>
            <person name="Sakauchi M."/>
            <person name="Shimada S."/>
            <person name="Shimizu T."/>
            <person name="Osawa M."/>
            <person name="Hirose S."/>
            <person name="Yamamoto T."/>
        </authorList>
    </citation>
    <scope>VARIANT DEE14 SER-269</scope>
</reference>
<reference key="11">
    <citation type="journal article" date="2013" name="Nat. Genet.">
        <title>Targeted resequencing in epileptic encephalopathies identifies de novo mutations in CHD2 and SYNGAP1.</title>
        <authorList>
            <person name="Carvill G.L."/>
            <person name="Heavin S.B."/>
            <person name="Yendle S.C."/>
            <person name="McMahon J.M."/>
            <person name="O'Roak B.J."/>
            <person name="Cook J."/>
            <person name="Khan A."/>
            <person name="Dorschner M.O."/>
            <person name="Weaver M."/>
            <person name="Calvert S."/>
            <person name="Malone S."/>
            <person name="Wallace G."/>
            <person name="Stanley T."/>
            <person name="Bye A.M."/>
            <person name="Bleasel A."/>
            <person name="Howell K.B."/>
            <person name="Kivity S."/>
            <person name="Mackay M.T."/>
            <person name="Rodriguez-Casero V."/>
            <person name="Webster R."/>
            <person name="Korczyn A."/>
            <person name="Afawi Z."/>
            <person name="Zelnick N."/>
            <person name="Lerman-Sagie T."/>
            <person name="Lev D."/>
            <person name="Moeller R.S."/>
            <person name="Gill D."/>
            <person name="Andrade D.M."/>
            <person name="Freeman J.L."/>
            <person name="Sadleir L.G."/>
            <person name="Shendure J."/>
            <person name="Berkovic S.F."/>
            <person name="Scheffer I.E."/>
            <person name="Mefford H.C."/>
        </authorList>
    </citation>
    <scope>VARIANTS DEE14 ILE-562 AND GLN-1088</scope>
</reference>
<reference key="12">
    <citation type="journal article" date="2014" name="Hum. Mol. Genet.">
        <title>Clinical whole-genome sequencing in severe early-onset epilepsy reveals new genes and improves molecular diagnosis.</title>
        <authorList>
            <consortium name="WGS500 Consortium"/>
            <person name="Martin H.C."/>
            <person name="Kim G.E."/>
            <person name="Pagnamenta A.T."/>
            <person name="Murakami Y."/>
            <person name="Carvill G.L."/>
            <person name="Meyer E."/>
            <person name="Copley R.R."/>
            <person name="Rimmer A."/>
            <person name="Barcia G."/>
            <person name="Fleming M.R."/>
            <person name="Kronengold J."/>
            <person name="Brown M.R."/>
            <person name="Hudspith K.A."/>
            <person name="Broxholme J."/>
            <person name="Kanapin A."/>
            <person name="Cazier J.B."/>
            <person name="Kinoshita T."/>
            <person name="Nabbout R."/>
            <person name="Bentley D."/>
            <person name="McVean G."/>
            <person name="Heavin S."/>
            <person name="Zaiwalla Z."/>
            <person name="McShane T."/>
            <person name="Mefford H.C."/>
            <person name="Shears D."/>
            <person name="Stewart H."/>
            <person name="Kurian M.A."/>
            <person name="Scheffer I.E."/>
            <person name="Blair E."/>
            <person name="Donnelly P."/>
            <person name="Kaczmarek L.K."/>
            <person name="Taylor J.C."/>
        </authorList>
    </citation>
    <scope>VARIANT DEE14 THR-947</scope>
    <scope>CHARACTERIZATION OF VARIANT DEE14 THR-947</scope>
</reference>
<reference key="13">
    <citation type="journal article" date="2016" name="J. Med. Genet.">
        <title>Improving diagnosis and broadening the phenotypes in early-onset seizure and severe developmental delay disorders through gene panel analysis.</title>
        <authorList>
            <person name="Trump N."/>
            <person name="McTague A."/>
            <person name="Brittain H."/>
            <person name="Papandreou A."/>
            <person name="Meyer E."/>
            <person name="Ngoh A."/>
            <person name="Palmer R."/>
            <person name="Morrogh D."/>
            <person name="Boustred C."/>
            <person name="Hurst J.A."/>
            <person name="Jenkins L."/>
            <person name="Kurian M.A."/>
            <person name="Scott R.H."/>
        </authorList>
    </citation>
    <scope>VARIANTS DEE14 SER-269; LYS-877 AND THR-915</scope>
</reference>
<reference key="14">
    <citation type="journal article" date="2017" name="Hum. Mutat.">
        <title>Diagnostic targeted resequencing in 349 patients with drug-resistant pediatric epilepsies identifies causative mutations in 30 different genes.</title>
        <authorList>
            <consortium name="Clinical Study Group"/>
            <person name="Parrini E."/>
            <person name="Marini C."/>
            <person name="Mei D."/>
            <person name="Galuppi A."/>
            <person name="Cellini E."/>
            <person name="Pucatti D."/>
            <person name="Chiti L."/>
            <person name="Rutigliano D."/>
            <person name="Bianchini C."/>
            <person name="Virdo S."/>
            <person name="De Vita D."/>
            <person name="Bigoni S."/>
            <person name="Barba C."/>
            <person name="Mari F."/>
            <person name="Montomoli M."/>
            <person name="Pisano T."/>
            <person name="Rosati A."/>
            <person name="Guerrini R."/>
        </authorList>
    </citation>
    <scope>VARIANTS DEE14 VAL-497 AND GLU-928</scope>
</reference>
<protein>
    <recommendedName>
        <fullName>Potassium channel subfamily T member 1</fullName>
    </recommendedName>
    <alternativeName>
        <fullName>KCa4.1</fullName>
    </alternativeName>
    <alternativeName>
        <fullName>KNa1.1</fullName>
    </alternativeName>
    <alternativeName>
        <fullName evidence="19">Sodium and chloride-activated ATP-sensitive potassium channel Slo2.2</fullName>
    </alternativeName>
</protein>